<name>RPOB_MAGMM</name>
<sequence>MALTFTEKKRLRKNFGRISSIIDIPNLISVQKESFVRFLQTGTEFEKMKDTGLHGVFLSVFPIHDYAGTVSLEYVSYALGEPKYDVDECLQRGMTFSAPLKVAFRLVIWDENEETGTKTVREIKEQDVYLGEIPLMTNTGTFIINGTERVIVSQMHRSPGVFFDHDRGKTHSSGKLLFSARVIPYRGSWLDFEFDPKDLLFARIDRRRKLPVTTLLRAMGMSSEQILERFYEIETFRKEGVVWQKRMVPERLMGNRLNYAIVHPESGEEIVKAKKRVTARHIKKFEELGMDWLPVSQEELIGSFVARNMSDVMGEVVIEAGAEITEEMVQYLEDGGIKEIDVLFIDGMSVGAYLRNTLALDKNSGQDEALIDIYRMMRPGEPPTVDAAKALFNNLFFNSDRYDLSTVGRLKMNSRLSLNTELHIRTLQHDDILGVVDILLKLKDGHGKVDDIDHLGNRRVRSVGELLENQVRIGLVRMERAIRERMSSAEADQLVPHDVMNSKPFSAVIREFFGSSQLSQFMDQTNPLSEITHKRRLSALGPGGMTRERAGFEVRDVHPTHYGRICPIETPEGPNIGLINSLSTYARINEFGFIESPYRQVKEGTPIDQVDFLSAIDEENYIIAQANAKLGDEASEEDALIQCRHKLEFMVATPDRVNYQDVSPKQTVSVAASLIPFLENDDANRALMGSNMQRQAVPLIKTDAPLVGTGIESVVARDSGVTITARRTGVVDEVDAARIVVKADEEPGSTEPGVDIYNLTKFSRSNQNTCINQVPLVKNGERVTAGDIIADGPSTQIGELALGRNVLVAFMPWNGYNFEDSILISERLVAEDVFTSIHIDEFEVMARDTKLGAEEITRDMPNVGEDALRNLDESGIIYVGAEVKPGDILVGKVTPKGETQLTPEEKLLRAIFGEKASDVRDTSLRLPPGVAGTVVDVRVFSRRGLEKDDRAKLIDQDEIALLRKDMAAERRIIERDADERIRNLMNGKPVRSAPGLQPGDHISQSWLDKSPSSHLRDVVLDDDAITQQIEGIRHHVEKAADRLKKRFESKVEKLERGDDLPPGVLKMVKVYIAVKRKLQPGDKMAGRHGNKGVISKINPLEDMPYMANGTPVDIVLNPLGVPSRMNVGQILETHLGWAARGMGFKIEEALKQHRKGVADVLRRQFEEIYDNTRESAEIAALSDDQLVDMAKNLQYGVPTATPVFDGAIESDISSWLNKAGLPTSGQIQLIDGRTGEPFDRHVTVGYIYMLKLHHLVDDKIHARSIGPYSLVTQQPLGGKAQFGGQRFGEMEVWALEAYGAAYTLQEMLTVKSDDVAGRTKIYESIVKGDDTFEAGVPESFNVLVKELQALALDVTLQRDD</sequence>
<dbReference type="EC" id="2.7.7.6" evidence="1"/>
<dbReference type="EMBL" id="CP000471">
    <property type="protein sequence ID" value="ABK43359.1"/>
    <property type="molecule type" value="Genomic_DNA"/>
</dbReference>
<dbReference type="RefSeq" id="WP_011712519.1">
    <property type="nucleotide sequence ID" value="NC_008576.1"/>
</dbReference>
<dbReference type="SMR" id="A0L5W6"/>
<dbReference type="STRING" id="156889.Mmc1_0840"/>
<dbReference type="KEGG" id="mgm:Mmc1_0840"/>
<dbReference type="eggNOG" id="COG0085">
    <property type="taxonomic scope" value="Bacteria"/>
</dbReference>
<dbReference type="HOGENOM" id="CLU_000524_4_0_5"/>
<dbReference type="OrthoDB" id="9803954at2"/>
<dbReference type="Proteomes" id="UP000002586">
    <property type="component" value="Chromosome"/>
</dbReference>
<dbReference type="GO" id="GO:0000428">
    <property type="term" value="C:DNA-directed RNA polymerase complex"/>
    <property type="evidence" value="ECO:0007669"/>
    <property type="project" value="UniProtKB-KW"/>
</dbReference>
<dbReference type="GO" id="GO:0003677">
    <property type="term" value="F:DNA binding"/>
    <property type="evidence" value="ECO:0007669"/>
    <property type="project" value="UniProtKB-UniRule"/>
</dbReference>
<dbReference type="GO" id="GO:0003899">
    <property type="term" value="F:DNA-directed RNA polymerase activity"/>
    <property type="evidence" value="ECO:0007669"/>
    <property type="project" value="UniProtKB-UniRule"/>
</dbReference>
<dbReference type="GO" id="GO:0032549">
    <property type="term" value="F:ribonucleoside binding"/>
    <property type="evidence" value="ECO:0007669"/>
    <property type="project" value="InterPro"/>
</dbReference>
<dbReference type="GO" id="GO:0006351">
    <property type="term" value="P:DNA-templated transcription"/>
    <property type="evidence" value="ECO:0007669"/>
    <property type="project" value="UniProtKB-UniRule"/>
</dbReference>
<dbReference type="CDD" id="cd00653">
    <property type="entry name" value="RNA_pol_B_RPB2"/>
    <property type="match status" value="1"/>
</dbReference>
<dbReference type="FunFam" id="2.40.50.100:FF:000006">
    <property type="entry name" value="DNA-directed RNA polymerase subunit beta"/>
    <property type="match status" value="1"/>
</dbReference>
<dbReference type="FunFam" id="3.90.1800.10:FF:000001">
    <property type="entry name" value="DNA-directed RNA polymerase subunit beta"/>
    <property type="match status" value="1"/>
</dbReference>
<dbReference type="Gene3D" id="2.40.50.100">
    <property type="match status" value="1"/>
</dbReference>
<dbReference type="Gene3D" id="2.40.50.150">
    <property type="match status" value="1"/>
</dbReference>
<dbReference type="Gene3D" id="3.90.1100.10">
    <property type="match status" value="2"/>
</dbReference>
<dbReference type="Gene3D" id="2.30.150.10">
    <property type="entry name" value="DNA-directed RNA polymerase, beta subunit, external 1 domain"/>
    <property type="match status" value="1"/>
</dbReference>
<dbReference type="Gene3D" id="2.40.270.10">
    <property type="entry name" value="DNA-directed RNA polymerase, subunit 2, domain 6"/>
    <property type="match status" value="1"/>
</dbReference>
<dbReference type="Gene3D" id="3.90.1800.10">
    <property type="entry name" value="RNA polymerase alpha subunit dimerisation domain"/>
    <property type="match status" value="1"/>
</dbReference>
<dbReference type="Gene3D" id="3.90.1110.10">
    <property type="entry name" value="RNA polymerase Rpb2, domain 2"/>
    <property type="match status" value="1"/>
</dbReference>
<dbReference type="HAMAP" id="MF_01321">
    <property type="entry name" value="RNApol_bact_RpoB"/>
    <property type="match status" value="1"/>
</dbReference>
<dbReference type="InterPro" id="IPR042107">
    <property type="entry name" value="DNA-dir_RNA_pol_bsu_ext_1_sf"/>
</dbReference>
<dbReference type="InterPro" id="IPR019462">
    <property type="entry name" value="DNA-dir_RNA_pol_bsu_external_1"/>
</dbReference>
<dbReference type="InterPro" id="IPR015712">
    <property type="entry name" value="DNA-dir_RNA_pol_su2"/>
</dbReference>
<dbReference type="InterPro" id="IPR007120">
    <property type="entry name" value="DNA-dir_RNAP_su2_dom"/>
</dbReference>
<dbReference type="InterPro" id="IPR037033">
    <property type="entry name" value="DNA-dir_RNAP_su2_hyb_sf"/>
</dbReference>
<dbReference type="InterPro" id="IPR010243">
    <property type="entry name" value="RNA_pol_bsu_bac"/>
</dbReference>
<dbReference type="InterPro" id="IPR007121">
    <property type="entry name" value="RNA_pol_bsu_CS"/>
</dbReference>
<dbReference type="InterPro" id="IPR007644">
    <property type="entry name" value="RNA_pol_bsu_protrusion"/>
</dbReference>
<dbReference type="InterPro" id="IPR007642">
    <property type="entry name" value="RNA_pol_Rpb2_2"/>
</dbReference>
<dbReference type="InterPro" id="IPR037034">
    <property type="entry name" value="RNA_pol_Rpb2_2_sf"/>
</dbReference>
<dbReference type="InterPro" id="IPR007645">
    <property type="entry name" value="RNA_pol_Rpb2_3"/>
</dbReference>
<dbReference type="InterPro" id="IPR007641">
    <property type="entry name" value="RNA_pol_Rpb2_7"/>
</dbReference>
<dbReference type="InterPro" id="IPR014724">
    <property type="entry name" value="RNA_pol_RPB2_OB-fold"/>
</dbReference>
<dbReference type="NCBIfam" id="NF001616">
    <property type="entry name" value="PRK00405.1"/>
    <property type="match status" value="1"/>
</dbReference>
<dbReference type="NCBIfam" id="TIGR02013">
    <property type="entry name" value="rpoB"/>
    <property type="match status" value="1"/>
</dbReference>
<dbReference type="PANTHER" id="PTHR20856">
    <property type="entry name" value="DNA-DIRECTED RNA POLYMERASE I SUBUNIT 2"/>
    <property type="match status" value="1"/>
</dbReference>
<dbReference type="Pfam" id="PF04563">
    <property type="entry name" value="RNA_pol_Rpb2_1"/>
    <property type="match status" value="1"/>
</dbReference>
<dbReference type="Pfam" id="PF04561">
    <property type="entry name" value="RNA_pol_Rpb2_2"/>
    <property type="match status" value="2"/>
</dbReference>
<dbReference type="Pfam" id="PF04565">
    <property type="entry name" value="RNA_pol_Rpb2_3"/>
    <property type="match status" value="1"/>
</dbReference>
<dbReference type="Pfam" id="PF10385">
    <property type="entry name" value="RNA_pol_Rpb2_45"/>
    <property type="match status" value="1"/>
</dbReference>
<dbReference type="Pfam" id="PF00562">
    <property type="entry name" value="RNA_pol_Rpb2_6"/>
    <property type="match status" value="1"/>
</dbReference>
<dbReference type="Pfam" id="PF04560">
    <property type="entry name" value="RNA_pol_Rpb2_7"/>
    <property type="match status" value="1"/>
</dbReference>
<dbReference type="SUPFAM" id="SSF64484">
    <property type="entry name" value="beta and beta-prime subunits of DNA dependent RNA-polymerase"/>
    <property type="match status" value="1"/>
</dbReference>
<dbReference type="PROSITE" id="PS01166">
    <property type="entry name" value="RNA_POL_BETA"/>
    <property type="match status" value="1"/>
</dbReference>
<organism>
    <name type="scientific">Magnetococcus marinus (strain ATCC BAA-1437 / JCM 17883 / MC-1)</name>
    <dbReference type="NCBI Taxonomy" id="156889"/>
    <lineage>
        <taxon>Bacteria</taxon>
        <taxon>Pseudomonadati</taxon>
        <taxon>Pseudomonadota</taxon>
        <taxon>Alphaproteobacteria</taxon>
        <taxon>Magnetococcales</taxon>
        <taxon>Magnetococcaceae</taxon>
        <taxon>Magnetococcus</taxon>
    </lineage>
</organism>
<comment type="function">
    <text evidence="1">DNA-dependent RNA polymerase catalyzes the transcription of DNA into RNA using the four ribonucleoside triphosphates as substrates.</text>
</comment>
<comment type="catalytic activity">
    <reaction evidence="1">
        <text>RNA(n) + a ribonucleoside 5'-triphosphate = RNA(n+1) + diphosphate</text>
        <dbReference type="Rhea" id="RHEA:21248"/>
        <dbReference type="Rhea" id="RHEA-COMP:14527"/>
        <dbReference type="Rhea" id="RHEA-COMP:17342"/>
        <dbReference type="ChEBI" id="CHEBI:33019"/>
        <dbReference type="ChEBI" id="CHEBI:61557"/>
        <dbReference type="ChEBI" id="CHEBI:140395"/>
        <dbReference type="EC" id="2.7.7.6"/>
    </reaction>
</comment>
<comment type="subunit">
    <text evidence="1">The RNAP catalytic core consists of 2 alpha, 1 beta, 1 beta' and 1 omega subunit. When a sigma factor is associated with the core the holoenzyme is formed, which can initiate transcription.</text>
</comment>
<comment type="similarity">
    <text evidence="1">Belongs to the RNA polymerase beta chain family.</text>
</comment>
<evidence type="ECO:0000255" key="1">
    <source>
        <dbReference type="HAMAP-Rule" id="MF_01321"/>
    </source>
</evidence>
<keyword id="KW-0240">DNA-directed RNA polymerase</keyword>
<keyword id="KW-0548">Nucleotidyltransferase</keyword>
<keyword id="KW-1185">Reference proteome</keyword>
<keyword id="KW-0804">Transcription</keyword>
<keyword id="KW-0808">Transferase</keyword>
<gene>
    <name evidence="1" type="primary">rpoB</name>
    <name type="ordered locus">Mmc1_0840</name>
</gene>
<accession>A0L5W6</accession>
<proteinExistence type="inferred from homology"/>
<reference key="1">
    <citation type="journal article" date="2009" name="Appl. Environ. Microbiol.">
        <title>Complete genome sequence of the chemolithoautotrophic marine magnetotactic coccus strain MC-1.</title>
        <authorList>
            <person name="Schubbe S."/>
            <person name="Williams T.J."/>
            <person name="Xie G."/>
            <person name="Kiss H.E."/>
            <person name="Brettin T.S."/>
            <person name="Martinez D."/>
            <person name="Ross C.A."/>
            <person name="Schuler D."/>
            <person name="Cox B.L."/>
            <person name="Nealson K.H."/>
            <person name="Bazylinski D.A."/>
        </authorList>
    </citation>
    <scope>NUCLEOTIDE SEQUENCE [LARGE SCALE GENOMIC DNA]</scope>
    <source>
        <strain>ATCC BAA-1437 / JCM 17883 / MC-1</strain>
    </source>
</reference>
<protein>
    <recommendedName>
        <fullName evidence="1">DNA-directed RNA polymerase subunit beta</fullName>
        <shortName evidence="1">RNAP subunit beta</shortName>
        <ecNumber evidence="1">2.7.7.6</ecNumber>
    </recommendedName>
    <alternativeName>
        <fullName evidence="1">RNA polymerase subunit beta</fullName>
    </alternativeName>
    <alternativeName>
        <fullName evidence="1">Transcriptase subunit beta</fullName>
    </alternativeName>
</protein>
<feature type="chain" id="PRO_0000300342" description="DNA-directed RNA polymerase subunit beta">
    <location>
        <begin position="1"/>
        <end position="1360"/>
    </location>
</feature>